<feature type="chain" id="PRO_1000045811" description="Adenosylcobinamide-GDP ribazoletransferase">
    <location>
        <begin position="1"/>
        <end position="247"/>
    </location>
</feature>
<feature type="transmembrane region" description="Helical" evidence="1">
    <location>
        <begin position="34"/>
        <end position="54"/>
    </location>
</feature>
<feature type="transmembrane region" description="Helical" evidence="1">
    <location>
        <begin position="59"/>
        <end position="79"/>
    </location>
</feature>
<feature type="transmembrane region" description="Helical" evidence="1">
    <location>
        <begin position="113"/>
        <end position="133"/>
    </location>
</feature>
<feature type="transmembrane region" description="Helical" evidence="1">
    <location>
        <begin position="138"/>
        <end position="158"/>
    </location>
</feature>
<feature type="transmembrane region" description="Helical" evidence="1">
    <location>
        <begin position="194"/>
        <end position="214"/>
    </location>
</feature>
<name>COBS_SHIBS</name>
<proteinExistence type="inferred from homology"/>
<sequence>MSKLFWAMLSFITRLPVPRRWSQGLDFEHYSRGIITFPLIGLLLGAISGLVFMVLQAWCGVPLAALFSVLVLALMTGGFHLDGLADTCDGVFSARSRDRMLEIMRDSRLGTHGGLALIFVVLAKILVLSELALRGEPILALLAAACAVSRGTAALLMYRHRYAREEGLGNVFIGKIDGRQTCVTLGLAAIFAAVLLPGMHGVAAMVVTMVAIFILGQLLKRTLGGQTGDTLGAAIELGELVFLLALL</sequence>
<protein>
    <recommendedName>
        <fullName evidence="1">Adenosylcobinamide-GDP ribazoletransferase</fullName>
        <ecNumber evidence="1">2.7.8.26</ecNumber>
    </recommendedName>
    <alternativeName>
        <fullName evidence="1">Cobalamin synthase</fullName>
    </alternativeName>
    <alternativeName>
        <fullName evidence="1">Cobalamin-5'-phosphate synthase</fullName>
    </alternativeName>
</protein>
<gene>
    <name evidence="1" type="primary">cobS</name>
    <name type="ordered locus">SBO_1211</name>
</gene>
<comment type="function">
    <text evidence="1">Joins adenosylcobinamide-GDP and alpha-ribazole to generate adenosylcobalamin (Ado-cobalamin). Also synthesizes adenosylcobalamin 5'-phosphate from adenosylcobinamide-GDP and alpha-ribazole 5'-phosphate.</text>
</comment>
<comment type="catalytic activity">
    <reaction evidence="1">
        <text>alpha-ribazole + adenosylcob(III)inamide-GDP = adenosylcob(III)alamin + GMP + H(+)</text>
        <dbReference type="Rhea" id="RHEA:16049"/>
        <dbReference type="ChEBI" id="CHEBI:10329"/>
        <dbReference type="ChEBI" id="CHEBI:15378"/>
        <dbReference type="ChEBI" id="CHEBI:18408"/>
        <dbReference type="ChEBI" id="CHEBI:58115"/>
        <dbReference type="ChEBI" id="CHEBI:60487"/>
        <dbReference type="EC" id="2.7.8.26"/>
    </reaction>
</comment>
<comment type="catalytic activity">
    <reaction evidence="1">
        <text>alpha-ribazole 5'-phosphate + adenosylcob(III)inamide-GDP = adenosylcob(III)alamin 5'-phosphate + GMP + H(+)</text>
        <dbReference type="Rhea" id="RHEA:23560"/>
        <dbReference type="ChEBI" id="CHEBI:15378"/>
        <dbReference type="ChEBI" id="CHEBI:57918"/>
        <dbReference type="ChEBI" id="CHEBI:58115"/>
        <dbReference type="ChEBI" id="CHEBI:60487"/>
        <dbReference type="ChEBI" id="CHEBI:60493"/>
        <dbReference type="EC" id="2.7.8.26"/>
    </reaction>
</comment>
<comment type="cofactor">
    <cofactor evidence="1">
        <name>Mg(2+)</name>
        <dbReference type="ChEBI" id="CHEBI:18420"/>
    </cofactor>
</comment>
<comment type="pathway">
    <text evidence="1">Cofactor biosynthesis; adenosylcobalamin biosynthesis; adenosylcobalamin from cob(II)yrinate a,c-diamide: step 7/7.</text>
</comment>
<comment type="subcellular location">
    <subcellularLocation>
        <location evidence="1">Cell inner membrane</location>
        <topology evidence="1">Multi-pass membrane protein</topology>
    </subcellularLocation>
</comment>
<comment type="similarity">
    <text evidence="1">Belongs to the CobS family.</text>
</comment>
<organism>
    <name type="scientific">Shigella boydii serotype 4 (strain Sb227)</name>
    <dbReference type="NCBI Taxonomy" id="300268"/>
    <lineage>
        <taxon>Bacteria</taxon>
        <taxon>Pseudomonadati</taxon>
        <taxon>Pseudomonadota</taxon>
        <taxon>Gammaproteobacteria</taxon>
        <taxon>Enterobacterales</taxon>
        <taxon>Enterobacteriaceae</taxon>
        <taxon>Shigella</taxon>
    </lineage>
</organism>
<reference key="1">
    <citation type="journal article" date="2005" name="Nucleic Acids Res.">
        <title>Genome dynamics and diversity of Shigella species, the etiologic agents of bacillary dysentery.</title>
        <authorList>
            <person name="Yang F."/>
            <person name="Yang J."/>
            <person name="Zhang X."/>
            <person name="Chen L."/>
            <person name="Jiang Y."/>
            <person name="Yan Y."/>
            <person name="Tang X."/>
            <person name="Wang J."/>
            <person name="Xiong Z."/>
            <person name="Dong J."/>
            <person name="Xue Y."/>
            <person name="Zhu Y."/>
            <person name="Xu X."/>
            <person name="Sun L."/>
            <person name="Chen S."/>
            <person name="Nie H."/>
            <person name="Peng J."/>
            <person name="Xu J."/>
            <person name="Wang Y."/>
            <person name="Yuan Z."/>
            <person name="Wen Y."/>
            <person name="Yao Z."/>
            <person name="Shen Y."/>
            <person name="Qiang B."/>
            <person name="Hou Y."/>
            <person name="Yu J."/>
            <person name="Jin Q."/>
        </authorList>
    </citation>
    <scope>NUCLEOTIDE SEQUENCE [LARGE SCALE GENOMIC DNA]</scope>
    <source>
        <strain>Sb227</strain>
    </source>
</reference>
<keyword id="KW-0997">Cell inner membrane</keyword>
<keyword id="KW-1003">Cell membrane</keyword>
<keyword id="KW-0169">Cobalamin biosynthesis</keyword>
<keyword id="KW-0460">Magnesium</keyword>
<keyword id="KW-0472">Membrane</keyword>
<keyword id="KW-0808">Transferase</keyword>
<keyword id="KW-0812">Transmembrane</keyword>
<keyword id="KW-1133">Transmembrane helix</keyword>
<accession>Q322B3</accession>
<dbReference type="EC" id="2.7.8.26" evidence="1"/>
<dbReference type="EMBL" id="CP000036">
    <property type="protein sequence ID" value="ABB65845.1"/>
    <property type="molecule type" value="Genomic_DNA"/>
</dbReference>
<dbReference type="RefSeq" id="WP_004983079.1">
    <property type="nucleotide sequence ID" value="NC_007613.1"/>
</dbReference>
<dbReference type="KEGG" id="sbo:SBO_1211"/>
<dbReference type="HOGENOM" id="CLU_057426_1_1_6"/>
<dbReference type="UniPathway" id="UPA00148">
    <property type="reaction ID" value="UER00238"/>
</dbReference>
<dbReference type="Proteomes" id="UP000007067">
    <property type="component" value="Chromosome"/>
</dbReference>
<dbReference type="GO" id="GO:0005886">
    <property type="term" value="C:plasma membrane"/>
    <property type="evidence" value="ECO:0007669"/>
    <property type="project" value="UniProtKB-SubCell"/>
</dbReference>
<dbReference type="GO" id="GO:0051073">
    <property type="term" value="F:adenosylcobinamide-GDP ribazoletransferase activity"/>
    <property type="evidence" value="ECO:0007669"/>
    <property type="project" value="UniProtKB-UniRule"/>
</dbReference>
<dbReference type="GO" id="GO:0008818">
    <property type="term" value="F:cobalamin 5'-phosphate synthase activity"/>
    <property type="evidence" value="ECO:0007669"/>
    <property type="project" value="UniProtKB-UniRule"/>
</dbReference>
<dbReference type="GO" id="GO:0009236">
    <property type="term" value="P:cobalamin biosynthetic process"/>
    <property type="evidence" value="ECO:0007669"/>
    <property type="project" value="UniProtKB-UniRule"/>
</dbReference>
<dbReference type="HAMAP" id="MF_00719">
    <property type="entry name" value="CobS"/>
    <property type="match status" value="1"/>
</dbReference>
<dbReference type="InterPro" id="IPR003805">
    <property type="entry name" value="CobS"/>
</dbReference>
<dbReference type="NCBIfam" id="TIGR00317">
    <property type="entry name" value="cobS"/>
    <property type="match status" value="1"/>
</dbReference>
<dbReference type="PANTHER" id="PTHR34148">
    <property type="entry name" value="ADENOSYLCOBINAMIDE-GDP RIBAZOLETRANSFERASE"/>
    <property type="match status" value="1"/>
</dbReference>
<dbReference type="PANTHER" id="PTHR34148:SF1">
    <property type="entry name" value="ADENOSYLCOBINAMIDE-GDP RIBAZOLETRANSFERASE"/>
    <property type="match status" value="1"/>
</dbReference>
<dbReference type="Pfam" id="PF02654">
    <property type="entry name" value="CobS"/>
    <property type="match status" value="1"/>
</dbReference>
<evidence type="ECO:0000255" key="1">
    <source>
        <dbReference type="HAMAP-Rule" id="MF_00719"/>
    </source>
</evidence>